<dbReference type="EMBL" id="KJ412227">
    <property type="protein sequence ID" value="AHX39270.1"/>
    <property type="molecule type" value="Genomic_DNA"/>
</dbReference>
<dbReference type="PaxDb" id="4932-YER006C-A"/>
<dbReference type="EnsemblFungi" id="YER006C-A_mRNA">
    <property type="protein sequence ID" value="YER006C-A"/>
    <property type="gene ID" value="YER006C-A"/>
</dbReference>
<dbReference type="AGR" id="SGD:S000028745"/>
<dbReference type="SGD" id="S000028745">
    <property type="gene designation" value="YER006C-A"/>
</dbReference>
<dbReference type="HOGENOM" id="CLU_2238727_0_0_1"/>
<feature type="chain" id="PRO_0000430989" description="Putative uncharacterized protein YER006C-A">
    <location>
        <begin position="1"/>
        <end position="105"/>
    </location>
</feature>
<comment type="miscellaneous">
    <text evidence="1">Partially overlaps PAC2.</text>
</comment>
<comment type="caution">
    <text evidence="2">Product of a dubious gene prediction unlikely to encode a functional protein. Because of that it is not part of the S.cerevisiae S288c complete/reference proteome set.</text>
</comment>
<protein>
    <recommendedName>
        <fullName evidence="1">Putative uncharacterized protein YER006C-A</fullName>
    </recommendedName>
</protein>
<gene>
    <name evidence="3" type="ordered locus">YER006C-A</name>
</gene>
<sequence>MFSPAVIVPFHPISFYRRPRLNNTYEFDGAKISTNLESVPNFISHAISEIRFAFYILYILYMKHNKSWNFLMISLSKEQKGSKTKKNKMYSNEFKSTPIIYSNVI</sequence>
<organism>
    <name type="scientific">Saccharomyces cerevisiae (strain ATCC 204508 / S288c)</name>
    <name type="common">Baker's yeast</name>
    <dbReference type="NCBI Taxonomy" id="559292"/>
    <lineage>
        <taxon>Eukaryota</taxon>
        <taxon>Fungi</taxon>
        <taxon>Dikarya</taxon>
        <taxon>Ascomycota</taxon>
        <taxon>Saccharomycotina</taxon>
        <taxon>Saccharomycetes</taxon>
        <taxon>Saccharomycetales</taxon>
        <taxon>Saccharomycetaceae</taxon>
        <taxon>Saccharomyces</taxon>
    </lineage>
</organism>
<accession>A0A023PXI8</accession>
<reference key="1">
    <citation type="journal article" date="1997" name="Nature">
        <title>The nucleotide sequence of Saccharomyces cerevisiae chromosome V.</title>
        <authorList>
            <person name="Dietrich F.S."/>
            <person name="Mulligan J.T."/>
            <person name="Hennessy K.M."/>
            <person name="Yelton M.A."/>
            <person name="Allen E."/>
            <person name="Araujo R."/>
            <person name="Aviles E."/>
            <person name="Berno A."/>
            <person name="Brennan T."/>
            <person name="Carpenter J."/>
            <person name="Chen E."/>
            <person name="Cherry J.M."/>
            <person name="Chung E."/>
            <person name="Duncan M."/>
            <person name="Guzman E."/>
            <person name="Hartzell G."/>
            <person name="Hunicke-Smith S."/>
            <person name="Hyman R.W."/>
            <person name="Kayser A."/>
            <person name="Komp C."/>
            <person name="Lashkari D."/>
            <person name="Lew H."/>
            <person name="Lin D."/>
            <person name="Mosedale D."/>
            <person name="Nakahara K."/>
            <person name="Namath A."/>
            <person name="Norgren R."/>
            <person name="Oefner P."/>
            <person name="Oh C."/>
            <person name="Petel F.X."/>
            <person name="Roberts D."/>
            <person name="Sehl P."/>
            <person name="Schramm S."/>
            <person name="Shogren T."/>
            <person name="Smith V."/>
            <person name="Taylor P."/>
            <person name="Wei Y."/>
            <person name="Botstein D."/>
            <person name="Davis R.W."/>
        </authorList>
    </citation>
    <scope>NUCLEOTIDE SEQUENCE [LARGE SCALE GENOMIC DNA]</scope>
    <source>
        <strain>ATCC 204508 / S288c</strain>
    </source>
</reference>
<reference key="2">
    <citation type="journal article" date="2014" name="G3 (Bethesda)">
        <title>The reference genome sequence of Saccharomyces cerevisiae: Then and now.</title>
        <authorList>
            <person name="Engel S.R."/>
            <person name="Dietrich F.S."/>
            <person name="Fisk D.G."/>
            <person name="Binkley G."/>
            <person name="Balakrishnan R."/>
            <person name="Costanzo M.C."/>
            <person name="Dwight S.S."/>
            <person name="Hitz B.C."/>
            <person name="Karra K."/>
            <person name="Nash R.S."/>
            <person name="Weng S."/>
            <person name="Wong E.D."/>
            <person name="Lloyd P."/>
            <person name="Skrzypek M.S."/>
            <person name="Miyasato S.R."/>
            <person name="Simison M."/>
            <person name="Cherry J.M."/>
        </authorList>
    </citation>
    <scope>GENOME REANNOTATION</scope>
    <source>
        <strain>ATCC 204508 / S288c</strain>
    </source>
</reference>
<evidence type="ECO:0000305" key="1"/>
<evidence type="ECO:0000305" key="2">
    <source>
    </source>
</evidence>
<evidence type="ECO:0000312" key="3">
    <source>
        <dbReference type="SGD" id="S000028745"/>
    </source>
</evidence>
<name>YE006_YEAST</name>
<proteinExistence type="uncertain"/>